<organism>
    <name type="scientific">Terebra variegata</name>
    <name type="common">Variegate auger snail</name>
    <dbReference type="NCBI Taxonomy" id="3244988"/>
    <lineage>
        <taxon>Eukaryota</taxon>
        <taxon>Metazoa</taxon>
        <taxon>Spiralia</taxon>
        <taxon>Lophotrochozoa</taxon>
        <taxon>Mollusca</taxon>
        <taxon>Gastropoda</taxon>
        <taxon>Caenogastropoda</taxon>
        <taxon>Neogastropoda</taxon>
        <taxon>Conoidea</taxon>
        <taxon>Terebridae</taxon>
        <taxon>Neoterebra</taxon>
    </lineage>
</organism>
<comment type="function">
    <text evidence="1 4">Injections of 20 uM of this synthetic peptide (Ile) causes partial paralysis to polychaete worms (Nereis virens), the natural prey of terebrid snails (PubMed:24713808). This paralysis may be due to an inhibition of nicotinic receptors at the neuromuscular junction (Probable).</text>
</comment>
<comment type="subcellular location">
    <subcellularLocation>
        <location evidence="1">Secreted</location>
    </subcellularLocation>
</comment>
<comment type="tissue specificity">
    <text evidence="4">Expressed by the salivary gland. This peptide is considered as a venom peptide.</text>
</comment>
<comment type="domain">
    <text evidence="4">The cysteine framework is III (CC-C-C-CC). Classified in the M-3 branch, since 3 residues stand between the fourth and the fifth cysteine residues. This peptide has a cysteine scaffold similar to the M superfamily of conotoxins, but it displays a disulfide pattern previously unknown in native cone snail peptides.</text>
</comment>
<comment type="caution">
    <text evidence="4">It is unsure whether the 3rd residue is an Ile or a Leu. NMR structural calculations were carried out using only the Ile-3 form of the peptide.</text>
</comment>
<reference key="1">
    <citation type="journal article" date="2014" name="PLoS ONE">
        <title>Sample limited characterization of a novel disulfide-rich venom peptide toxin from terebrid marine snail Terebra variegata.</title>
        <authorList>
            <person name="Anand P."/>
            <person name="Grigoryan A."/>
            <person name="Bhuiyan M.H."/>
            <person name="Ueberheide B."/>
            <person name="Russell V."/>
            <person name="Quinonez J."/>
            <person name="Moy P."/>
            <person name="Chait B.T."/>
            <person name="Poget S.F."/>
            <person name="Holford M."/>
        </authorList>
    </citation>
    <scope>PROTEIN SEQUENCE</scope>
    <scope>SYNTHESIS</scope>
    <scope>FUNCTION</scope>
    <scope>IDENTIFICATION BY MASS SPECTROMETRY</scope>
    <scope>STRUCTURE BY NMR</scope>
    <scope>DISULFIDE BOND</scope>
    <scope>SUBCELLULAR LOCATION</scope>
    <source>
        <tissue>Venom</tissue>
    </source>
</reference>
<accession>A0A0B4J184</accession>
<keyword id="KW-0002">3D-structure</keyword>
<keyword id="KW-0008">Acetylcholine receptor inhibiting toxin</keyword>
<keyword id="KW-0903">Direct protein sequencing</keyword>
<keyword id="KW-1015">Disulfide bond</keyword>
<keyword id="KW-0528">Neurotoxin</keyword>
<keyword id="KW-0629">Postsynaptic neurotoxin</keyword>
<keyword id="KW-0964">Secreted</keyword>
<keyword id="KW-0800">Toxin</keyword>
<evidence type="ECO:0000269" key="1">
    <source>
    </source>
</evidence>
<evidence type="ECO:0000303" key="2">
    <source>
    </source>
</evidence>
<evidence type="ECO:0000305" key="3"/>
<evidence type="ECO:0000305" key="4">
    <source>
    </source>
</evidence>
<evidence type="ECO:0007829" key="5">
    <source>
        <dbReference type="PDB" id="2MIX"/>
    </source>
</evidence>
<dbReference type="PDB" id="2MIX">
    <property type="method" value="NMR"/>
    <property type="chains" value="A=1-21"/>
</dbReference>
<dbReference type="PDBsum" id="2MIX"/>
<dbReference type="SMR" id="A0A0B4J184"/>
<dbReference type="EvolutionaryTrace" id="A0A0B4J184"/>
<dbReference type="GO" id="GO:0005576">
    <property type="term" value="C:extracellular region"/>
    <property type="evidence" value="ECO:0007669"/>
    <property type="project" value="UniProtKB-SubCell"/>
</dbReference>
<dbReference type="GO" id="GO:0035792">
    <property type="term" value="C:host cell postsynaptic membrane"/>
    <property type="evidence" value="ECO:0007669"/>
    <property type="project" value="UniProtKB-KW"/>
</dbReference>
<dbReference type="GO" id="GO:0030550">
    <property type="term" value="F:acetylcholine receptor inhibitor activity"/>
    <property type="evidence" value="ECO:0007669"/>
    <property type="project" value="UniProtKB-KW"/>
</dbReference>
<dbReference type="GO" id="GO:0090729">
    <property type="term" value="F:toxin activity"/>
    <property type="evidence" value="ECO:0007669"/>
    <property type="project" value="UniProtKB-KW"/>
</dbReference>
<name>T3A_TERVA</name>
<feature type="peptide" id="PRO_0000435098" description="Venom peptide Tv1">
    <location>
        <begin position="1"/>
        <end position="21"/>
    </location>
</feature>
<feature type="disulfide bond" evidence="1">
    <location>
        <begin position="4"/>
        <end position="20"/>
    </location>
</feature>
<feature type="disulfide bond" evidence="1">
    <location>
        <begin position="5"/>
        <end position="21"/>
    </location>
</feature>
<feature type="disulfide bond" evidence="1">
    <location>
        <begin position="7"/>
        <end position="16"/>
    </location>
</feature>
<feature type="unsure residue" description="I or L" evidence="1">
    <location>
        <position position="3"/>
    </location>
</feature>
<feature type="strand" evidence="5">
    <location>
        <begin position="4"/>
        <end position="10"/>
    </location>
</feature>
<feature type="strand" evidence="5">
    <location>
        <begin position="13"/>
        <end position="19"/>
    </location>
</feature>
<sequence length="21" mass="2317">TRICCGCYWNGSKDVCSQSCC</sequence>
<proteinExistence type="evidence at protein level"/>
<protein>
    <recommendedName>
        <fullName evidence="2">Venom peptide Tv1</fullName>
    </recommendedName>
    <alternativeName>
        <fullName evidence="3">Teretoxin v3a</fullName>
    </alternativeName>
</protein>